<evidence type="ECO:0000255" key="1"/>
<evidence type="ECO:0000305" key="2"/>
<reference key="1">
    <citation type="journal article" date="1989" name="J. Virol.">
        <title>The mouse adenovirus type 1 contains an unusual E3 region.</title>
        <authorList>
            <person name="Raviprakash K.S."/>
            <person name="Grunhaus A."/>
            <person name="el Kholy M.A."/>
            <person name="Horwitz M.S."/>
        </authorList>
    </citation>
    <scope>NUCLEOTIDE SEQUENCE [GENOMIC DNA]</scope>
</reference>
<organism>
    <name type="scientific">Murine adenovirus A serotype 1</name>
    <name type="common">MAdV-1</name>
    <name type="synonym">Murine adenovirus 1</name>
    <dbReference type="NCBI Taxonomy" id="10530"/>
    <lineage>
        <taxon>Viruses</taxon>
        <taxon>Varidnaviria</taxon>
        <taxon>Bamfordvirae</taxon>
        <taxon>Preplasmiviricota</taxon>
        <taxon>Tectiliviricetes</taxon>
        <taxon>Rowavirales</taxon>
        <taxon>Adenoviridae</taxon>
        <taxon>Mastadenovirus</taxon>
        <taxon>Murine mastadenovirus A</taxon>
    </lineage>
</organism>
<protein>
    <recommendedName>
        <fullName>Early E3 17.7 kDa glycoprotein</fullName>
    </recommendedName>
</protein>
<name>E3GL_ADEM1</name>
<accession>P19720</accession>
<feature type="chain" id="PRO_0000221762" description="Early E3 17.7 kDa glycoprotein">
    <location>
        <begin position="1"/>
        <end position="161"/>
    </location>
</feature>
<feature type="transmembrane region" description="Helical" evidence="1">
    <location>
        <begin position="102"/>
        <end position="129"/>
    </location>
</feature>
<feature type="glycosylation site" description="N-linked (GlcNAc...) asparagine; by host" evidence="1">
    <location>
        <position position="14"/>
    </location>
</feature>
<feature type="glycosylation site" description="N-linked (GlcNAc...) asparagine; by host" evidence="1">
    <location>
        <position position="87"/>
    </location>
</feature>
<sequence length="161" mass="17699">MGKLTVCTSKPYLNFSRAIRTYLCGSKCDNAIYFTPQKIVIELVQEKKTTQLLLLLAASIALYLLSPQLGARMLFELVQARTTSVSNSSVAAALFACAGEEIINPAIFLFLHVLTLVIVLAMAAEVIYNRCRRTTRPTAPPPPVNNADFNLADALDETYNK</sequence>
<comment type="subcellular location">
    <subcellularLocation>
        <location evidence="2">Host membrane</location>
        <topology evidence="2">Single-pass membrane protein</topology>
    </subcellularLocation>
</comment>
<dbReference type="EMBL" id="M30594">
    <property type="protein sequence ID" value="AAA42433.1"/>
    <property type="molecule type" value="Genomic_DNA"/>
</dbReference>
<dbReference type="PIR" id="B33382">
    <property type="entry name" value="ERADMS"/>
</dbReference>
<dbReference type="GO" id="GO:0033644">
    <property type="term" value="C:host cell membrane"/>
    <property type="evidence" value="ECO:0007669"/>
    <property type="project" value="UniProtKB-SubCell"/>
</dbReference>
<dbReference type="GO" id="GO:0016020">
    <property type="term" value="C:membrane"/>
    <property type="evidence" value="ECO:0007669"/>
    <property type="project" value="UniProtKB-KW"/>
</dbReference>
<keyword id="KW-0244">Early protein</keyword>
<keyword id="KW-0325">Glycoprotein</keyword>
<keyword id="KW-1043">Host membrane</keyword>
<keyword id="KW-0472">Membrane</keyword>
<keyword id="KW-0812">Transmembrane</keyword>
<keyword id="KW-1133">Transmembrane helix</keyword>
<proteinExistence type="predicted"/>
<organismHost>
    <name type="scientific">Mus musculus</name>
    <name type="common">Mouse</name>
    <dbReference type="NCBI Taxonomy" id="10090"/>
</organismHost>